<organism>
    <name type="scientific">Pseudomonas fluorescens (strain SBW25)</name>
    <dbReference type="NCBI Taxonomy" id="216595"/>
    <lineage>
        <taxon>Bacteria</taxon>
        <taxon>Pseudomonadati</taxon>
        <taxon>Pseudomonadota</taxon>
        <taxon>Gammaproteobacteria</taxon>
        <taxon>Pseudomonadales</taxon>
        <taxon>Pseudomonadaceae</taxon>
        <taxon>Pseudomonas</taxon>
    </lineage>
</organism>
<accession>C3K5G5</accession>
<reference key="1">
    <citation type="journal article" date="2009" name="Genome Biol.">
        <title>Genomic and genetic analyses of diversity and plant interactions of Pseudomonas fluorescens.</title>
        <authorList>
            <person name="Silby M.W."/>
            <person name="Cerdeno-Tarraga A.M."/>
            <person name="Vernikos G.S."/>
            <person name="Giddens S.R."/>
            <person name="Jackson R.W."/>
            <person name="Preston G.M."/>
            <person name="Zhang X.-X."/>
            <person name="Moon C.D."/>
            <person name="Gehrig S.M."/>
            <person name="Godfrey S.A.C."/>
            <person name="Knight C.G."/>
            <person name="Malone J.G."/>
            <person name="Robinson Z."/>
            <person name="Spiers A.J."/>
            <person name="Harris S."/>
            <person name="Challis G.L."/>
            <person name="Yaxley A.M."/>
            <person name="Harris D."/>
            <person name="Seeger K."/>
            <person name="Murphy L."/>
            <person name="Rutter S."/>
            <person name="Squares R."/>
            <person name="Quail M.A."/>
            <person name="Saunders E."/>
            <person name="Mavromatis K."/>
            <person name="Brettin T.S."/>
            <person name="Bentley S.D."/>
            <person name="Hothersall J."/>
            <person name="Stephens E."/>
            <person name="Thomas C.M."/>
            <person name="Parkhill J."/>
            <person name="Levy S.B."/>
            <person name="Rainey P.B."/>
            <person name="Thomson N.R."/>
        </authorList>
    </citation>
    <scope>NUCLEOTIDE SEQUENCE [LARGE SCALE GENOMIC DNA]</scope>
    <source>
        <strain>SBW25</strain>
    </source>
</reference>
<gene>
    <name evidence="1" type="primary">tusA</name>
    <name type="ordered locus">PFLU_1544</name>
</gene>
<sequence length="83" mass="9414">MSHPEEMPVDGTLDATGLNCPEPVMMLHQHIRDLPPGGLLKVIATDPSTRRDIPKFCVFLDHELVDQQEQAGTYLYWIRKNSV</sequence>
<keyword id="KW-0963">Cytoplasm</keyword>
<proteinExistence type="inferred from homology"/>
<protein>
    <recommendedName>
        <fullName evidence="1">Sulfur carrier protein TusA</fullName>
    </recommendedName>
</protein>
<evidence type="ECO:0000255" key="1">
    <source>
        <dbReference type="HAMAP-Rule" id="MF_00413"/>
    </source>
</evidence>
<dbReference type="EMBL" id="AM181176">
    <property type="protein sequence ID" value="CAY47793.1"/>
    <property type="molecule type" value="Genomic_DNA"/>
</dbReference>
<dbReference type="RefSeq" id="WP_012722835.1">
    <property type="nucleotide sequence ID" value="NC_012660.1"/>
</dbReference>
<dbReference type="SMR" id="C3K5G5"/>
<dbReference type="STRING" id="294.SRM1_03799"/>
<dbReference type="eggNOG" id="COG0425">
    <property type="taxonomic scope" value="Bacteria"/>
</dbReference>
<dbReference type="HOGENOM" id="CLU_165255_5_1_6"/>
<dbReference type="OrthoDB" id="9797352at2"/>
<dbReference type="GO" id="GO:0005737">
    <property type="term" value="C:cytoplasm"/>
    <property type="evidence" value="ECO:0007669"/>
    <property type="project" value="UniProtKB-SubCell"/>
</dbReference>
<dbReference type="GO" id="GO:0097163">
    <property type="term" value="F:sulfur carrier activity"/>
    <property type="evidence" value="ECO:0007669"/>
    <property type="project" value="UniProtKB-UniRule"/>
</dbReference>
<dbReference type="GO" id="GO:0002143">
    <property type="term" value="P:tRNA wobble position uridine thiolation"/>
    <property type="evidence" value="ECO:0007669"/>
    <property type="project" value="InterPro"/>
</dbReference>
<dbReference type="CDD" id="cd03423">
    <property type="entry name" value="SirA"/>
    <property type="match status" value="1"/>
</dbReference>
<dbReference type="Gene3D" id="3.30.110.40">
    <property type="entry name" value="TusA-like domain"/>
    <property type="match status" value="1"/>
</dbReference>
<dbReference type="HAMAP" id="MF_00413">
    <property type="entry name" value="Thiourid_synth_A"/>
    <property type="match status" value="1"/>
</dbReference>
<dbReference type="InterPro" id="IPR022931">
    <property type="entry name" value="Sulphur_carrier_TusA"/>
</dbReference>
<dbReference type="InterPro" id="IPR001455">
    <property type="entry name" value="TusA-like"/>
</dbReference>
<dbReference type="InterPro" id="IPR036868">
    <property type="entry name" value="TusA-like_sf"/>
</dbReference>
<dbReference type="NCBIfam" id="NF001423">
    <property type="entry name" value="PRK00299.1"/>
    <property type="match status" value="1"/>
</dbReference>
<dbReference type="PANTHER" id="PTHR33279:SF2">
    <property type="entry name" value="SULFUR CARRIER PROTEIN TUSA"/>
    <property type="match status" value="1"/>
</dbReference>
<dbReference type="PANTHER" id="PTHR33279">
    <property type="entry name" value="SULFUR CARRIER PROTEIN YEDF-RELATED"/>
    <property type="match status" value="1"/>
</dbReference>
<dbReference type="Pfam" id="PF01206">
    <property type="entry name" value="TusA"/>
    <property type="match status" value="1"/>
</dbReference>
<dbReference type="SUPFAM" id="SSF64307">
    <property type="entry name" value="SirA-like"/>
    <property type="match status" value="1"/>
</dbReference>
<dbReference type="PROSITE" id="PS01148">
    <property type="entry name" value="UPF0033"/>
    <property type="match status" value="1"/>
</dbReference>
<comment type="function">
    <text evidence="1">Sulfur carrier protein which probably makes part of a sulfur-relay system.</text>
</comment>
<comment type="subcellular location">
    <subcellularLocation>
        <location evidence="1">Cytoplasm</location>
    </subcellularLocation>
</comment>
<comment type="similarity">
    <text evidence="1">Belongs to the sulfur carrier protein TusA family.</text>
</comment>
<name>TUSA_PSEFS</name>
<feature type="chain" id="PRO_1000206010" description="Sulfur carrier protein TusA">
    <location>
        <begin position="1"/>
        <end position="83"/>
    </location>
</feature>
<feature type="active site" description="Cysteine persulfide intermediate" evidence="1">
    <location>
        <position position="20"/>
    </location>
</feature>